<keyword id="KW-1185">Reference proteome</keyword>
<protein>
    <recommendedName>
        <fullName evidence="1">Putative protein ZBED10P</fullName>
    </recommendedName>
    <alternativeName>
        <fullName evidence="2">ZBED6 C-terminal-like protein</fullName>
    </alternativeName>
    <alternativeName>
        <fullName evidence="2">zinc finger BED-type containing 10 pseudogene</fullName>
    </alternativeName>
</protein>
<comment type="caution">
    <text evidence="1">Could be the product of a pseudogene. Similar to the C-terminus of ZBED6, but lacks BED domains, and therefore is probably not involved in transcriptional regulation. Encoded by a DNA transposon located in the 5'-untranslated region (5'-UTR) of LRRC61.</text>
</comment>
<accession>Q96FA7</accession>
<reference key="1">
    <citation type="journal article" date="2003" name="Nature">
        <title>The DNA sequence of human chromosome 7.</title>
        <authorList>
            <person name="Hillier L.W."/>
            <person name="Fulton R.S."/>
            <person name="Fulton L.A."/>
            <person name="Graves T.A."/>
            <person name="Pepin K.H."/>
            <person name="Wagner-McPherson C."/>
            <person name="Layman D."/>
            <person name="Maas J."/>
            <person name="Jaeger S."/>
            <person name="Walker R."/>
            <person name="Wylie K."/>
            <person name="Sekhon M."/>
            <person name="Becker M.C."/>
            <person name="O'Laughlin M.D."/>
            <person name="Schaller M.E."/>
            <person name="Fewell G.A."/>
            <person name="Delehaunty K.D."/>
            <person name="Miner T.L."/>
            <person name="Nash W.E."/>
            <person name="Cordes M."/>
            <person name="Du H."/>
            <person name="Sun H."/>
            <person name="Edwards J."/>
            <person name="Bradshaw-Cordum H."/>
            <person name="Ali J."/>
            <person name="Andrews S."/>
            <person name="Isak A."/>
            <person name="Vanbrunt A."/>
            <person name="Nguyen C."/>
            <person name="Du F."/>
            <person name="Lamar B."/>
            <person name="Courtney L."/>
            <person name="Kalicki J."/>
            <person name="Ozersky P."/>
            <person name="Bielicki L."/>
            <person name="Scott K."/>
            <person name="Holmes A."/>
            <person name="Harkins R."/>
            <person name="Harris A."/>
            <person name="Strong C.M."/>
            <person name="Hou S."/>
            <person name="Tomlinson C."/>
            <person name="Dauphin-Kohlberg S."/>
            <person name="Kozlowicz-Reilly A."/>
            <person name="Leonard S."/>
            <person name="Rohlfing T."/>
            <person name="Rock S.M."/>
            <person name="Tin-Wollam A.-M."/>
            <person name="Abbott A."/>
            <person name="Minx P."/>
            <person name="Maupin R."/>
            <person name="Strowmatt C."/>
            <person name="Latreille P."/>
            <person name="Miller N."/>
            <person name="Johnson D."/>
            <person name="Murray J."/>
            <person name="Woessner J.P."/>
            <person name="Wendl M.C."/>
            <person name="Yang S.-P."/>
            <person name="Schultz B.R."/>
            <person name="Wallis J.W."/>
            <person name="Spieth J."/>
            <person name="Bieri T.A."/>
            <person name="Nelson J.O."/>
            <person name="Berkowicz N."/>
            <person name="Wohldmann P.E."/>
            <person name="Cook L.L."/>
            <person name="Hickenbotham M.T."/>
            <person name="Eldred J."/>
            <person name="Williams D."/>
            <person name="Bedell J.A."/>
            <person name="Mardis E.R."/>
            <person name="Clifton S.W."/>
            <person name="Chissoe S.L."/>
            <person name="Marra M.A."/>
            <person name="Raymond C."/>
            <person name="Haugen E."/>
            <person name="Gillett W."/>
            <person name="Zhou Y."/>
            <person name="James R."/>
            <person name="Phelps K."/>
            <person name="Iadanoto S."/>
            <person name="Bubb K."/>
            <person name="Simms E."/>
            <person name="Levy R."/>
            <person name="Clendenning J."/>
            <person name="Kaul R."/>
            <person name="Kent W.J."/>
            <person name="Furey T.S."/>
            <person name="Baertsch R.A."/>
            <person name="Brent M.R."/>
            <person name="Keibler E."/>
            <person name="Flicek P."/>
            <person name="Bork P."/>
            <person name="Suyama M."/>
            <person name="Bailey J.A."/>
            <person name="Portnoy M.E."/>
            <person name="Torrents D."/>
            <person name="Chinwalla A.T."/>
            <person name="Gish W.R."/>
            <person name="Eddy S.R."/>
            <person name="McPherson J.D."/>
            <person name="Olson M.V."/>
            <person name="Eichler E.E."/>
            <person name="Green E.D."/>
            <person name="Waterston R.H."/>
            <person name="Wilson R.K."/>
        </authorList>
    </citation>
    <scope>NUCLEOTIDE SEQUENCE [LARGE SCALE GENOMIC DNA]</scope>
</reference>
<reference key="2">
    <citation type="journal article" date="2004" name="Genome Res.">
        <title>The status, quality, and expansion of the NIH full-length cDNA project: the Mammalian Gene Collection (MGC).</title>
        <authorList>
            <consortium name="The MGC Project Team"/>
        </authorList>
    </citation>
    <scope>NUCLEOTIDE SEQUENCE [LARGE SCALE MRNA]</scope>
    <source>
        <tissue>Colon</tissue>
    </source>
</reference>
<reference key="3">
    <citation type="journal article" date="2013" name="PLoS ONE">
        <title>ZBED evolution: repeated utilization of DNA transposons as regulators of diverse host functions.</title>
        <authorList>
            <person name="Hayward A."/>
            <person name="Ghazal A."/>
            <person name="Andersson G."/>
            <person name="Andersson L."/>
            <person name="Jern P."/>
        </authorList>
    </citation>
    <scope>PHYLOGENY</scope>
    <scope>GENE NOMENCLATURE</scope>
</reference>
<feature type="chain" id="PRO_0000089586" description="Putative protein ZBED10P">
    <location>
        <begin position="1"/>
        <end position="236"/>
    </location>
</feature>
<gene>
    <name evidence="2" type="primary">ZBED10P</name>
    <name evidence="2" type="synonym">C7orf29</name>
    <name evidence="2" type="synonym">ZBED6CL</name>
</gene>
<name>ZB10P_HUMAN</name>
<sequence length="236" mass="26352">MVVREASAAQASLSQVLPQLRYLHIFLEQVHTHFQEQSVGERGAAIQLAEGLARQLCTDCQLNKLFYREEFVLATLLDPCFKGKIEAILPWGPTDIDHWKQVLVYKVKEIRVSEYSLNSPSPLQSPRGLCVDPTRVAKSSGVEGRSQGEPLQSSSHSGAFLLAQREKGLLESMGLLASERSGGSLSTKSHWASIIVKKYLWENETVGAQDDPLAYWEKKREAWPPSICLTPHRSLL</sequence>
<organism>
    <name type="scientific">Homo sapiens</name>
    <name type="common">Human</name>
    <dbReference type="NCBI Taxonomy" id="9606"/>
    <lineage>
        <taxon>Eukaryota</taxon>
        <taxon>Metazoa</taxon>
        <taxon>Chordata</taxon>
        <taxon>Craniata</taxon>
        <taxon>Vertebrata</taxon>
        <taxon>Euteleostomi</taxon>
        <taxon>Mammalia</taxon>
        <taxon>Eutheria</taxon>
        <taxon>Euarchontoglires</taxon>
        <taxon>Primates</taxon>
        <taxon>Haplorrhini</taxon>
        <taxon>Catarrhini</taxon>
        <taxon>Hominidae</taxon>
        <taxon>Homo</taxon>
    </lineage>
</organism>
<proteinExistence type="uncertain"/>
<evidence type="ECO:0000305" key="1"/>
<evidence type="ECO:0000312" key="2">
    <source>
        <dbReference type="HGNC" id="HGNC:21720"/>
    </source>
</evidence>
<dbReference type="EMBL" id="AC005586">
    <property type="protein sequence ID" value="AAP21891.1"/>
    <property type="molecule type" value="Genomic_DNA"/>
</dbReference>
<dbReference type="EMBL" id="BC011406">
    <property type="protein sequence ID" value="AAH11406.1"/>
    <property type="molecule type" value="mRNA"/>
</dbReference>
<dbReference type="RefSeq" id="NP_612443.1">
    <property type="nucleotide sequence ID" value="NM_138434.2"/>
</dbReference>
<dbReference type="SMR" id="Q96FA7"/>
<dbReference type="BioGRID" id="125259">
    <property type="interactions" value="20"/>
</dbReference>
<dbReference type="IntAct" id="Q96FA7">
    <property type="interactions" value="13"/>
</dbReference>
<dbReference type="STRING" id="9606.ENSP00000343242"/>
<dbReference type="iPTMnet" id="Q96FA7"/>
<dbReference type="PhosphoSitePlus" id="Q96FA7"/>
<dbReference type="BioMuta" id="ZBED6CL"/>
<dbReference type="PaxDb" id="9606-ENSP00000343242"/>
<dbReference type="Antibodypedia" id="18604">
    <property type="antibodies" value="84 antibodies from 17 providers"/>
</dbReference>
<dbReference type="DNASU" id="113763"/>
<dbReference type="UCSC" id="uc003wgy.5">
    <property type="organism name" value="human"/>
</dbReference>
<dbReference type="AGR" id="HGNC:21720"/>
<dbReference type="GeneCards" id="ZBED10P"/>
<dbReference type="HGNC" id="HGNC:21720">
    <property type="gene designation" value="ZBED10P"/>
</dbReference>
<dbReference type="MIM" id="615252">
    <property type="type" value="gene"/>
</dbReference>
<dbReference type="neXtProt" id="NX_Q96FA7"/>
<dbReference type="VEuPathDB" id="HostDB:ENSG00000188707"/>
<dbReference type="eggNOG" id="ENOG502SJ2Q">
    <property type="taxonomic scope" value="Eukaryota"/>
</dbReference>
<dbReference type="HOGENOM" id="CLU_1158601_0_0_1"/>
<dbReference type="InParanoid" id="Q96FA7"/>
<dbReference type="OMA" id="KQEAWPP"/>
<dbReference type="OrthoDB" id="1607513at2759"/>
<dbReference type="PAN-GO" id="Q96FA7">
    <property type="GO annotations" value="0 GO annotations based on evolutionary models"/>
</dbReference>
<dbReference type="PhylomeDB" id="Q96FA7"/>
<dbReference type="PathwayCommons" id="Q96FA7"/>
<dbReference type="SignaLink" id="Q96FA7"/>
<dbReference type="BioGRID-ORCS" id="113763">
    <property type="hits" value="11 hits in 1121 CRISPR screens"/>
</dbReference>
<dbReference type="GenomeRNAi" id="113763"/>
<dbReference type="Pharos" id="Q96FA7">
    <property type="development level" value="Tdark"/>
</dbReference>
<dbReference type="Proteomes" id="UP000005640">
    <property type="component" value="Chromosome 7"/>
</dbReference>
<dbReference type="RNAct" id="Q96FA7">
    <property type="molecule type" value="protein"/>
</dbReference>
<dbReference type="Bgee" id="ENSG00000188707">
    <property type="expression patterns" value="Expressed in right adrenal gland cortex and 143 other cell types or tissues"/>
</dbReference>
<dbReference type="ExpressionAtlas" id="Q96FA7">
    <property type="expression patterns" value="baseline and differential"/>
</dbReference>
<dbReference type="InterPro" id="IPR052865">
    <property type="entry name" value="Zinc_finger_BED"/>
</dbReference>
<dbReference type="PANTHER" id="PTHR47241">
    <property type="entry name" value="FINGER PROTEIN, PUTATIVE-RELATED"/>
    <property type="match status" value="1"/>
</dbReference>
<dbReference type="PANTHER" id="PTHR47241:SF3">
    <property type="entry name" value="HAT C-TERMINAL DIMERISATION DOMAIN-CONTAINING PROTEIN"/>
    <property type="match status" value="1"/>
</dbReference>